<evidence type="ECO:0000255" key="1">
    <source>
        <dbReference type="HAMAP-Rule" id="MF_01302"/>
    </source>
</evidence>
<evidence type="ECO:0000305" key="2"/>
<gene>
    <name evidence="1" type="primary">rpsH</name>
    <name type="ordered locus">Rfer_4229</name>
</gene>
<protein>
    <recommendedName>
        <fullName evidence="1">Small ribosomal subunit protein uS8</fullName>
    </recommendedName>
    <alternativeName>
        <fullName evidence="2">30S ribosomal protein S8</fullName>
    </alternativeName>
</protein>
<keyword id="KW-1185">Reference proteome</keyword>
<keyword id="KW-0687">Ribonucleoprotein</keyword>
<keyword id="KW-0689">Ribosomal protein</keyword>
<keyword id="KW-0694">RNA-binding</keyword>
<keyword id="KW-0699">rRNA-binding</keyword>
<reference key="1">
    <citation type="submission" date="2006-02" db="EMBL/GenBank/DDBJ databases">
        <title>Complete sequence of chromosome of Rhodoferax ferrireducens DSM 15236.</title>
        <authorList>
            <person name="Copeland A."/>
            <person name="Lucas S."/>
            <person name="Lapidus A."/>
            <person name="Barry K."/>
            <person name="Detter J.C."/>
            <person name="Glavina del Rio T."/>
            <person name="Hammon N."/>
            <person name="Israni S."/>
            <person name="Pitluck S."/>
            <person name="Brettin T."/>
            <person name="Bruce D."/>
            <person name="Han C."/>
            <person name="Tapia R."/>
            <person name="Gilna P."/>
            <person name="Kiss H."/>
            <person name="Schmutz J."/>
            <person name="Larimer F."/>
            <person name="Land M."/>
            <person name="Kyrpides N."/>
            <person name="Ivanova N."/>
            <person name="Richardson P."/>
        </authorList>
    </citation>
    <scope>NUCLEOTIDE SEQUENCE [LARGE SCALE GENOMIC DNA]</scope>
    <source>
        <strain>ATCC BAA-621 / DSM 15236 / T118</strain>
    </source>
</reference>
<name>RS8_ALBFT</name>
<sequence length="131" mass="14133">MSMSDPIADLLTRIRNAQMVAKTTVSVPSSKVKVAIAQVLTEEGYIDSFKVNANDGKPELEIVLKYYAGRPVIERIERVSRPGLRVYRGSDAIPQVQNGLGVAIVTTPKGVMTDRKARATGVGGEVLCYVA</sequence>
<proteinExistence type="inferred from homology"/>
<feature type="chain" id="PRO_0000290914" description="Small ribosomal subunit protein uS8">
    <location>
        <begin position="1"/>
        <end position="131"/>
    </location>
</feature>
<comment type="function">
    <text evidence="1">One of the primary rRNA binding proteins, it binds directly to 16S rRNA central domain where it helps coordinate assembly of the platform of the 30S subunit.</text>
</comment>
<comment type="subunit">
    <text evidence="1">Part of the 30S ribosomal subunit. Contacts proteins S5 and S12.</text>
</comment>
<comment type="similarity">
    <text evidence="1">Belongs to the universal ribosomal protein uS8 family.</text>
</comment>
<organism>
    <name type="scientific">Albidiferax ferrireducens (strain ATCC BAA-621 / DSM 15236 / T118)</name>
    <name type="common">Rhodoferax ferrireducens</name>
    <dbReference type="NCBI Taxonomy" id="338969"/>
    <lineage>
        <taxon>Bacteria</taxon>
        <taxon>Pseudomonadati</taxon>
        <taxon>Pseudomonadota</taxon>
        <taxon>Betaproteobacteria</taxon>
        <taxon>Burkholderiales</taxon>
        <taxon>Comamonadaceae</taxon>
        <taxon>Rhodoferax</taxon>
    </lineage>
</organism>
<dbReference type="EMBL" id="CP000267">
    <property type="protein sequence ID" value="ABD71916.1"/>
    <property type="molecule type" value="Genomic_DNA"/>
</dbReference>
<dbReference type="RefSeq" id="WP_011466473.1">
    <property type="nucleotide sequence ID" value="NC_007908.1"/>
</dbReference>
<dbReference type="SMR" id="Q21QN7"/>
<dbReference type="STRING" id="338969.Rfer_4229"/>
<dbReference type="KEGG" id="rfr:Rfer_4229"/>
<dbReference type="eggNOG" id="COG0096">
    <property type="taxonomic scope" value="Bacteria"/>
</dbReference>
<dbReference type="HOGENOM" id="CLU_098428_0_0_4"/>
<dbReference type="OrthoDB" id="9802617at2"/>
<dbReference type="Proteomes" id="UP000008332">
    <property type="component" value="Chromosome"/>
</dbReference>
<dbReference type="GO" id="GO:1990904">
    <property type="term" value="C:ribonucleoprotein complex"/>
    <property type="evidence" value="ECO:0007669"/>
    <property type="project" value="UniProtKB-KW"/>
</dbReference>
<dbReference type="GO" id="GO:0005840">
    <property type="term" value="C:ribosome"/>
    <property type="evidence" value="ECO:0007669"/>
    <property type="project" value="UniProtKB-KW"/>
</dbReference>
<dbReference type="GO" id="GO:0019843">
    <property type="term" value="F:rRNA binding"/>
    <property type="evidence" value="ECO:0007669"/>
    <property type="project" value="UniProtKB-UniRule"/>
</dbReference>
<dbReference type="GO" id="GO:0003735">
    <property type="term" value="F:structural constituent of ribosome"/>
    <property type="evidence" value="ECO:0007669"/>
    <property type="project" value="InterPro"/>
</dbReference>
<dbReference type="GO" id="GO:0006412">
    <property type="term" value="P:translation"/>
    <property type="evidence" value="ECO:0007669"/>
    <property type="project" value="UniProtKB-UniRule"/>
</dbReference>
<dbReference type="FunFam" id="3.30.1370.30:FF:000002">
    <property type="entry name" value="30S ribosomal protein S8"/>
    <property type="match status" value="1"/>
</dbReference>
<dbReference type="FunFam" id="3.30.1490.10:FF:000001">
    <property type="entry name" value="30S ribosomal protein S8"/>
    <property type="match status" value="1"/>
</dbReference>
<dbReference type="Gene3D" id="3.30.1370.30">
    <property type="match status" value="1"/>
</dbReference>
<dbReference type="Gene3D" id="3.30.1490.10">
    <property type="match status" value="1"/>
</dbReference>
<dbReference type="HAMAP" id="MF_01302_B">
    <property type="entry name" value="Ribosomal_uS8_B"/>
    <property type="match status" value="1"/>
</dbReference>
<dbReference type="InterPro" id="IPR000630">
    <property type="entry name" value="Ribosomal_uS8"/>
</dbReference>
<dbReference type="InterPro" id="IPR047863">
    <property type="entry name" value="Ribosomal_uS8_CS"/>
</dbReference>
<dbReference type="InterPro" id="IPR035987">
    <property type="entry name" value="Ribosomal_uS8_sf"/>
</dbReference>
<dbReference type="NCBIfam" id="NF001109">
    <property type="entry name" value="PRK00136.1"/>
    <property type="match status" value="1"/>
</dbReference>
<dbReference type="PANTHER" id="PTHR11758">
    <property type="entry name" value="40S RIBOSOMAL PROTEIN S15A"/>
    <property type="match status" value="1"/>
</dbReference>
<dbReference type="Pfam" id="PF00410">
    <property type="entry name" value="Ribosomal_S8"/>
    <property type="match status" value="1"/>
</dbReference>
<dbReference type="SUPFAM" id="SSF56047">
    <property type="entry name" value="Ribosomal protein S8"/>
    <property type="match status" value="1"/>
</dbReference>
<dbReference type="PROSITE" id="PS00053">
    <property type="entry name" value="RIBOSOMAL_S8"/>
    <property type="match status" value="1"/>
</dbReference>
<accession>Q21QN7</accession>